<sequence>MAYRKLGRTSSQRKAMLRDLTTDLLINESIVTTEARAKEIRKTVEKMITLGKRGDLHARRQAAAFVRNEIASENYDEATDKYTSTTALQKLFSEIAPRYAERNGGYTRILKTEPRRGDAAPMAIIELV</sequence>
<protein>
    <recommendedName>
        <fullName evidence="1">Large ribosomal subunit protein bL17</fullName>
    </recommendedName>
    <alternativeName>
        <fullName evidence="2">50S ribosomal protein L17</fullName>
    </alternativeName>
</protein>
<keyword id="KW-0687">Ribonucleoprotein</keyword>
<keyword id="KW-0689">Ribosomal protein</keyword>
<comment type="subunit">
    <text evidence="1">Part of the 50S ribosomal subunit. Contacts protein L32.</text>
</comment>
<comment type="similarity">
    <text evidence="1">Belongs to the bacterial ribosomal protein bL17 family.</text>
</comment>
<proteinExistence type="inferred from homology"/>
<accession>C1CAN9</accession>
<gene>
    <name evidence="1" type="primary">rplQ</name>
    <name type="ordered locus">SP70585_0292</name>
</gene>
<name>RL17_STRP7</name>
<reference key="1">
    <citation type="journal article" date="2010" name="Genome Biol.">
        <title>Structure and dynamics of the pan-genome of Streptococcus pneumoniae and closely related species.</title>
        <authorList>
            <person name="Donati C."/>
            <person name="Hiller N.L."/>
            <person name="Tettelin H."/>
            <person name="Muzzi A."/>
            <person name="Croucher N.J."/>
            <person name="Angiuoli S.V."/>
            <person name="Oggioni M."/>
            <person name="Dunning Hotopp J.C."/>
            <person name="Hu F.Z."/>
            <person name="Riley D.R."/>
            <person name="Covacci A."/>
            <person name="Mitchell T.J."/>
            <person name="Bentley S.D."/>
            <person name="Kilian M."/>
            <person name="Ehrlich G.D."/>
            <person name="Rappuoli R."/>
            <person name="Moxon E.R."/>
            <person name="Masignani V."/>
        </authorList>
    </citation>
    <scope>NUCLEOTIDE SEQUENCE [LARGE SCALE GENOMIC DNA]</scope>
    <source>
        <strain>70585</strain>
    </source>
</reference>
<feature type="chain" id="PRO_1000184045" description="Large ribosomal subunit protein bL17">
    <location>
        <begin position="1"/>
        <end position="128"/>
    </location>
</feature>
<dbReference type="EMBL" id="CP000918">
    <property type="protein sequence ID" value="ACO17048.1"/>
    <property type="molecule type" value="Genomic_DNA"/>
</dbReference>
<dbReference type="RefSeq" id="WP_000331493.1">
    <property type="nucleotide sequence ID" value="NC_012468.1"/>
</dbReference>
<dbReference type="SMR" id="C1CAN9"/>
<dbReference type="GeneID" id="93738984"/>
<dbReference type="KEGG" id="snm:SP70585_0292"/>
<dbReference type="HOGENOM" id="CLU_074407_2_2_9"/>
<dbReference type="Proteomes" id="UP000002211">
    <property type="component" value="Chromosome"/>
</dbReference>
<dbReference type="GO" id="GO:0022625">
    <property type="term" value="C:cytosolic large ribosomal subunit"/>
    <property type="evidence" value="ECO:0007669"/>
    <property type="project" value="TreeGrafter"/>
</dbReference>
<dbReference type="GO" id="GO:0003735">
    <property type="term" value="F:structural constituent of ribosome"/>
    <property type="evidence" value="ECO:0007669"/>
    <property type="project" value="InterPro"/>
</dbReference>
<dbReference type="GO" id="GO:0006412">
    <property type="term" value="P:translation"/>
    <property type="evidence" value="ECO:0007669"/>
    <property type="project" value="UniProtKB-UniRule"/>
</dbReference>
<dbReference type="FunFam" id="3.90.1030.10:FF:000002">
    <property type="entry name" value="50S ribosomal protein L17"/>
    <property type="match status" value="1"/>
</dbReference>
<dbReference type="Gene3D" id="3.90.1030.10">
    <property type="entry name" value="Ribosomal protein L17"/>
    <property type="match status" value="1"/>
</dbReference>
<dbReference type="HAMAP" id="MF_01368">
    <property type="entry name" value="Ribosomal_bL17"/>
    <property type="match status" value="1"/>
</dbReference>
<dbReference type="InterPro" id="IPR000456">
    <property type="entry name" value="Ribosomal_bL17"/>
</dbReference>
<dbReference type="InterPro" id="IPR047859">
    <property type="entry name" value="Ribosomal_bL17_CS"/>
</dbReference>
<dbReference type="InterPro" id="IPR036373">
    <property type="entry name" value="Ribosomal_bL17_sf"/>
</dbReference>
<dbReference type="NCBIfam" id="TIGR00059">
    <property type="entry name" value="L17"/>
    <property type="match status" value="1"/>
</dbReference>
<dbReference type="PANTHER" id="PTHR14413:SF16">
    <property type="entry name" value="LARGE RIBOSOMAL SUBUNIT PROTEIN BL17M"/>
    <property type="match status" value="1"/>
</dbReference>
<dbReference type="PANTHER" id="PTHR14413">
    <property type="entry name" value="RIBOSOMAL PROTEIN L17"/>
    <property type="match status" value="1"/>
</dbReference>
<dbReference type="Pfam" id="PF01196">
    <property type="entry name" value="Ribosomal_L17"/>
    <property type="match status" value="1"/>
</dbReference>
<dbReference type="SUPFAM" id="SSF64263">
    <property type="entry name" value="Prokaryotic ribosomal protein L17"/>
    <property type="match status" value="1"/>
</dbReference>
<dbReference type="PROSITE" id="PS01167">
    <property type="entry name" value="RIBOSOMAL_L17"/>
    <property type="match status" value="1"/>
</dbReference>
<evidence type="ECO:0000255" key="1">
    <source>
        <dbReference type="HAMAP-Rule" id="MF_01368"/>
    </source>
</evidence>
<evidence type="ECO:0000305" key="2"/>
<organism>
    <name type="scientific">Streptococcus pneumoniae (strain 70585)</name>
    <dbReference type="NCBI Taxonomy" id="488221"/>
    <lineage>
        <taxon>Bacteria</taxon>
        <taxon>Bacillati</taxon>
        <taxon>Bacillota</taxon>
        <taxon>Bacilli</taxon>
        <taxon>Lactobacillales</taxon>
        <taxon>Streptococcaceae</taxon>
        <taxon>Streptococcus</taxon>
    </lineage>
</organism>